<organism>
    <name type="scientific">Shigella sonnei (strain Ss046)</name>
    <dbReference type="NCBI Taxonomy" id="300269"/>
    <lineage>
        <taxon>Bacteria</taxon>
        <taxon>Pseudomonadati</taxon>
        <taxon>Pseudomonadota</taxon>
        <taxon>Gammaproteobacteria</taxon>
        <taxon>Enterobacterales</taxon>
        <taxon>Enterobacteriaceae</taxon>
        <taxon>Shigella</taxon>
    </lineage>
</organism>
<comment type="function">
    <text evidence="1">Protein and nucleotide deglycase that catalyzes the deglycation of the Maillard adducts formed between amino groups of proteins or nucleotides and reactive carbonyl groups of glyoxals. Thus, functions as a protein deglycase that repairs methylglyoxal- and glyoxal-glycated proteins, and releases repaired proteins and lactate or glycolate, respectively. Deglycates cysteine, arginine and lysine residues in proteins, and thus reactivates these proteins by reversing glycation by glyoxals. Acts on early glycation intermediates (hemithioacetals and aminocarbinols), preventing the formation of Schiff bases and advanced glycation endproducts (AGE). Also functions as a nucleotide deglycase able to repair glycated guanine in the free nucleotide pool (GTP, GDP, GMP, dGTP) and in DNA and RNA. Is thus involved in a major nucleotide repair system named guanine glycation repair (GG repair), dedicated to reversing methylglyoxal and glyoxal damage via nucleotide sanitization and direct nucleic acid repair. Plays an important role in protecting cells from carbonyl stress.</text>
</comment>
<comment type="catalytic activity">
    <reaction evidence="1">
        <text>N(omega)-(1-hydroxy-2-oxopropyl)-L-arginyl-[protein] + H2O = lactate + L-arginyl-[protein] + H(+)</text>
        <dbReference type="Rhea" id="RHEA:49548"/>
        <dbReference type="Rhea" id="RHEA-COMP:10532"/>
        <dbReference type="Rhea" id="RHEA-COMP:12428"/>
        <dbReference type="ChEBI" id="CHEBI:15377"/>
        <dbReference type="ChEBI" id="CHEBI:15378"/>
        <dbReference type="ChEBI" id="CHEBI:24996"/>
        <dbReference type="ChEBI" id="CHEBI:29965"/>
        <dbReference type="ChEBI" id="CHEBI:131708"/>
        <dbReference type="EC" id="3.5.1.124"/>
    </reaction>
</comment>
<comment type="catalytic activity">
    <reaction evidence="1">
        <text>N(6)-(1-hydroxy-2-oxopropyl)-L-lysyl-[protein] + H2O = lactate + L-lysyl-[protein] + H(+)</text>
        <dbReference type="Rhea" id="RHEA:49552"/>
        <dbReference type="Rhea" id="RHEA-COMP:9752"/>
        <dbReference type="Rhea" id="RHEA-COMP:12429"/>
        <dbReference type="ChEBI" id="CHEBI:15377"/>
        <dbReference type="ChEBI" id="CHEBI:15378"/>
        <dbReference type="ChEBI" id="CHEBI:24996"/>
        <dbReference type="ChEBI" id="CHEBI:29969"/>
        <dbReference type="ChEBI" id="CHEBI:131709"/>
        <dbReference type="EC" id="3.5.1.124"/>
    </reaction>
</comment>
<comment type="catalytic activity">
    <reaction evidence="1">
        <text>S-(1-hydroxy-2-oxopropyl)-L-cysteinyl-[protein] + H2O = lactate + L-cysteinyl-[protein] + H(+)</text>
        <dbReference type="Rhea" id="RHEA:49556"/>
        <dbReference type="Rhea" id="RHEA-COMP:10131"/>
        <dbReference type="Rhea" id="RHEA-COMP:12430"/>
        <dbReference type="ChEBI" id="CHEBI:15377"/>
        <dbReference type="ChEBI" id="CHEBI:15378"/>
        <dbReference type="ChEBI" id="CHEBI:24996"/>
        <dbReference type="ChEBI" id="CHEBI:29950"/>
        <dbReference type="ChEBI" id="CHEBI:131710"/>
        <dbReference type="EC" id="3.5.1.124"/>
    </reaction>
</comment>
<comment type="catalytic activity">
    <reaction evidence="1">
        <text>N(omega)-(1-hydroxy-2-oxoethyl)-L-arginyl-[protein] + H2O = L-arginyl-[protein] + glycolate + H(+)</text>
        <dbReference type="Rhea" id="RHEA:57188"/>
        <dbReference type="Rhea" id="RHEA-COMP:10532"/>
        <dbReference type="Rhea" id="RHEA-COMP:14844"/>
        <dbReference type="ChEBI" id="CHEBI:15377"/>
        <dbReference type="ChEBI" id="CHEBI:15378"/>
        <dbReference type="ChEBI" id="CHEBI:29805"/>
        <dbReference type="ChEBI" id="CHEBI:29965"/>
        <dbReference type="ChEBI" id="CHEBI:141553"/>
        <dbReference type="EC" id="3.5.1.124"/>
    </reaction>
</comment>
<comment type="catalytic activity">
    <reaction evidence="1">
        <text>N(6)-(1-hydroxy-2-oxoethyl)-L-lysyl-[protein] + H2O = glycolate + L-lysyl-[protein] + H(+)</text>
        <dbReference type="Rhea" id="RHEA:57192"/>
        <dbReference type="Rhea" id="RHEA-COMP:9752"/>
        <dbReference type="Rhea" id="RHEA-COMP:14845"/>
        <dbReference type="ChEBI" id="CHEBI:15377"/>
        <dbReference type="ChEBI" id="CHEBI:15378"/>
        <dbReference type="ChEBI" id="CHEBI:29805"/>
        <dbReference type="ChEBI" id="CHEBI:29969"/>
        <dbReference type="ChEBI" id="CHEBI:141554"/>
        <dbReference type="EC" id="3.5.1.124"/>
    </reaction>
</comment>
<comment type="catalytic activity">
    <reaction evidence="1">
        <text>S-(1-hydroxy-2-oxoethyl)-L-cysteinyl-[protein] + H2O = glycolate + L-cysteinyl-[protein] + H(+)</text>
        <dbReference type="Rhea" id="RHEA:57196"/>
        <dbReference type="Rhea" id="RHEA-COMP:10131"/>
        <dbReference type="Rhea" id="RHEA-COMP:14846"/>
        <dbReference type="ChEBI" id="CHEBI:15377"/>
        <dbReference type="ChEBI" id="CHEBI:15378"/>
        <dbReference type="ChEBI" id="CHEBI:29805"/>
        <dbReference type="ChEBI" id="CHEBI:29950"/>
        <dbReference type="ChEBI" id="CHEBI:141555"/>
        <dbReference type="EC" id="3.5.1.124"/>
    </reaction>
</comment>
<comment type="catalytic activity">
    <reaction evidence="1">
        <text>N(2)-(1-hydroxy-2-oxopropyl)-dGTP + H2O = lactate + dGTP + H(+)</text>
        <dbReference type="Rhea" id="RHEA:57244"/>
        <dbReference type="ChEBI" id="CHEBI:15377"/>
        <dbReference type="ChEBI" id="CHEBI:15378"/>
        <dbReference type="ChEBI" id="CHEBI:24996"/>
        <dbReference type="ChEBI" id="CHEBI:61429"/>
        <dbReference type="ChEBI" id="CHEBI:141569"/>
    </reaction>
</comment>
<comment type="catalytic activity">
    <reaction evidence="1">
        <text>N(2)-(1-hydroxy-2-oxopropyl)-GTP + H2O = lactate + GTP + H(+)</text>
        <dbReference type="Rhea" id="RHEA:57256"/>
        <dbReference type="ChEBI" id="CHEBI:15377"/>
        <dbReference type="ChEBI" id="CHEBI:15378"/>
        <dbReference type="ChEBI" id="CHEBI:24996"/>
        <dbReference type="ChEBI" id="CHEBI:37565"/>
        <dbReference type="ChEBI" id="CHEBI:141570"/>
    </reaction>
</comment>
<comment type="catalytic activity">
    <reaction evidence="1">
        <text>N(2)-(1-hydroxy-2-oxopropyl)-GDP + H2O = lactate + GDP + H(+)</text>
        <dbReference type="Rhea" id="RHEA:57260"/>
        <dbReference type="ChEBI" id="CHEBI:15377"/>
        <dbReference type="ChEBI" id="CHEBI:15378"/>
        <dbReference type="ChEBI" id="CHEBI:24996"/>
        <dbReference type="ChEBI" id="CHEBI:58189"/>
        <dbReference type="ChEBI" id="CHEBI:141573"/>
    </reaction>
</comment>
<comment type="catalytic activity">
    <reaction evidence="1">
        <text>N(2)-(1-hydroxy-2-oxopropyl)-GMP + H2O = lactate + GMP + H(+)</text>
        <dbReference type="Rhea" id="RHEA:57268"/>
        <dbReference type="ChEBI" id="CHEBI:15377"/>
        <dbReference type="ChEBI" id="CHEBI:15378"/>
        <dbReference type="ChEBI" id="CHEBI:24996"/>
        <dbReference type="ChEBI" id="CHEBI:58115"/>
        <dbReference type="ChEBI" id="CHEBI:141575"/>
    </reaction>
</comment>
<comment type="catalytic activity">
    <reaction evidence="1">
        <text>N(2)-(1-hydroxy-2-oxoethyl)-dGTP + H2O = dGTP + glycolate + H(+)</text>
        <dbReference type="Rhea" id="RHEA:57248"/>
        <dbReference type="ChEBI" id="CHEBI:15377"/>
        <dbReference type="ChEBI" id="CHEBI:15378"/>
        <dbReference type="ChEBI" id="CHEBI:29805"/>
        <dbReference type="ChEBI" id="CHEBI:61429"/>
        <dbReference type="ChEBI" id="CHEBI:141572"/>
    </reaction>
</comment>
<comment type="catalytic activity">
    <reaction evidence="1">
        <text>N(2)-(1-hydroxy-2-oxoethyl)-GTP + H2O = glycolate + GTP + H(+)</text>
        <dbReference type="Rhea" id="RHEA:57252"/>
        <dbReference type="ChEBI" id="CHEBI:15377"/>
        <dbReference type="ChEBI" id="CHEBI:15378"/>
        <dbReference type="ChEBI" id="CHEBI:29805"/>
        <dbReference type="ChEBI" id="CHEBI:37565"/>
        <dbReference type="ChEBI" id="CHEBI:141571"/>
    </reaction>
</comment>
<comment type="catalytic activity">
    <reaction evidence="1">
        <text>N(2)-(1-hydroxy-2-oxoethyl)-GDP + H2O = glycolate + GDP + H(+)</text>
        <dbReference type="Rhea" id="RHEA:57264"/>
        <dbReference type="ChEBI" id="CHEBI:15377"/>
        <dbReference type="ChEBI" id="CHEBI:15378"/>
        <dbReference type="ChEBI" id="CHEBI:29805"/>
        <dbReference type="ChEBI" id="CHEBI:58189"/>
        <dbReference type="ChEBI" id="CHEBI:141574"/>
    </reaction>
</comment>
<comment type="catalytic activity">
    <reaction evidence="1">
        <text>N(2)-(1-hydroxy-2-oxoethyl)-GMP + H2O = glycolate + GMP + H(+)</text>
        <dbReference type="Rhea" id="RHEA:57304"/>
        <dbReference type="ChEBI" id="CHEBI:15377"/>
        <dbReference type="ChEBI" id="CHEBI:15378"/>
        <dbReference type="ChEBI" id="CHEBI:29805"/>
        <dbReference type="ChEBI" id="CHEBI:58115"/>
        <dbReference type="ChEBI" id="CHEBI:141576"/>
    </reaction>
</comment>
<comment type="catalytic activity">
    <reaction evidence="1">
        <text>an N(2)-(1-hydroxy-2-oxopropyl)-guanosine in RNA + H2O = a guanosine in RNA + lactate + H(+)</text>
        <dbReference type="Rhea" id="RHEA:57288"/>
        <dbReference type="Rhea" id="RHEA-COMP:14855"/>
        <dbReference type="Rhea" id="RHEA-COMP:14858"/>
        <dbReference type="ChEBI" id="CHEBI:15377"/>
        <dbReference type="ChEBI" id="CHEBI:15378"/>
        <dbReference type="ChEBI" id="CHEBI:24996"/>
        <dbReference type="ChEBI" id="CHEBI:74269"/>
        <dbReference type="ChEBI" id="CHEBI:141580"/>
    </reaction>
</comment>
<comment type="catalytic activity">
    <reaction evidence="1">
        <text>an N(2)-(1-hydroxy-2-oxopropyl)-2'-deoxyguanosine in DNA + H2O = a 2'-deoxyguanosine in DNA + lactate + H(+)</text>
        <dbReference type="Rhea" id="RHEA:57300"/>
        <dbReference type="Rhea" id="RHEA-COMP:11367"/>
        <dbReference type="Rhea" id="RHEA-COMP:14856"/>
        <dbReference type="ChEBI" id="CHEBI:15377"/>
        <dbReference type="ChEBI" id="CHEBI:15378"/>
        <dbReference type="ChEBI" id="CHEBI:24996"/>
        <dbReference type="ChEBI" id="CHEBI:85445"/>
        <dbReference type="ChEBI" id="CHEBI:141578"/>
    </reaction>
</comment>
<comment type="catalytic activity">
    <reaction evidence="1">
        <text>an N(2)-(1-hydroxy-2-oxoethyl)-guanosine in RNA + H2O = a guanosine in RNA + glycolate + H(+)</text>
        <dbReference type="Rhea" id="RHEA:57292"/>
        <dbReference type="Rhea" id="RHEA-COMP:14855"/>
        <dbReference type="Rhea" id="RHEA-COMP:14859"/>
        <dbReference type="ChEBI" id="CHEBI:15377"/>
        <dbReference type="ChEBI" id="CHEBI:15378"/>
        <dbReference type="ChEBI" id="CHEBI:29805"/>
        <dbReference type="ChEBI" id="CHEBI:74269"/>
        <dbReference type="ChEBI" id="CHEBI:141581"/>
    </reaction>
</comment>
<comment type="catalytic activity">
    <reaction evidence="1">
        <text>an N(2)-(1-hydroxy-2-oxoethyl)-2'-deoxyguanosine in DNA + H2O = a 2'-deoxyguanosine in DNA + glycolate + H(+)</text>
        <dbReference type="Rhea" id="RHEA:57296"/>
        <dbReference type="Rhea" id="RHEA-COMP:11367"/>
        <dbReference type="Rhea" id="RHEA-COMP:14857"/>
        <dbReference type="ChEBI" id="CHEBI:15377"/>
        <dbReference type="ChEBI" id="CHEBI:15378"/>
        <dbReference type="ChEBI" id="CHEBI:29805"/>
        <dbReference type="ChEBI" id="CHEBI:85445"/>
        <dbReference type="ChEBI" id="CHEBI:141579"/>
    </reaction>
</comment>
<comment type="subunit">
    <text evidence="1">Homodimer.</text>
</comment>
<comment type="subcellular location">
    <subcellularLocation>
        <location evidence="1">Cytoplasm</location>
    </subcellularLocation>
</comment>
<comment type="induction">
    <text evidence="1">By heat shock.</text>
</comment>
<comment type="similarity">
    <text evidence="1">Belongs to the peptidase C56 family. HchA subfamily.</text>
</comment>
<keyword id="KW-0963">Cytoplasm</keyword>
<keyword id="KW-0227">DNA damage</keyword>
<keyword id="KW-0234">DNA repair</keyword>
<keyword id="KW-0378">Hydrolase</keyword>
<keyword id="KW-0479">Metal-binding</keyword>
<keyword id="KW-1185">Reference proteome</keyword>
<keyword id="KW-0346">Stress response</keyword>
<keyword id="KW-0862">Zinc</keyword>
<reference key="1">
    <citation type="journal article" date="2005" name="Nucleic Acids Res.">
        <title>Genome dynamics and diversity of Shigella species, the etiologic agents of bacillary dysentery.</title>
        <authorList>
            <person name="Yang F."/>
            <person name="Yang J."/>
            <person name="Zhang X."/>
            <person name="Chen L."/>
            <person name="Jiang Y."/>
            <person name="Yan Y."/>
            <person name="Tang X."/>
            <person name="Wang J."/>
            <person name="Xiong Z."/>
            <person name="Dong J."/>
            <person name="Xue Y."/>
            <person name="Zhu Y."/>
            <person name="Xu X."/>
            <person name="Sun L."/>
            <person name="Chen S."/>
            <person name="Nie H."/>
            <person name="Peng J."/>
            <person name="Xu J."/>
            <person name="Wang Y."/>
            <person name="Yuan Z."/>
            <person name="Wen Y."/>
            <person name="Yao Z."/>
            <person name="Shen Y."/>
            <person name="Qiang B."/>
            <person name="Hou Y."/>
            <person name="Yu J."/>
            <person name="Jin Q."/>
        </authorList>
    </citation>
    <scope>NUCLEOTIDE SEQUENCE [LARGE SCALE GENOMIC DNA]</scope>
    <source>
        <strain>Ss046</strain>
    </source>
</reference>
<sequence>MTVQTSKNPQVDIAEDNAFFPSEYSLSQYTSPVSDLDGVDYPKPYRGKHKILVIAADERYLPTDNGKLFSTGNHPIETLLPLYHLHAAGFEFEVATISGLMTKFEYWAMPHKDEKVMPFFEQHKSLFRNPKKLADVVASLNADSEYAAIFVPGGHGALIGLPESQDVAAALQWAIKNDRFVISLCHGPAAFLALRHGDNPLNGYSICAFPDAADKQTPEIGYMPGHLTWYFGEELKKMGMNIINDDITGRVHKDRKVLTGDSPFAANALGKLAAQEMLAAYAD</sequence>
<proteinExistence type="inferred from homology"/>
<name>HCHA_SHISS</name>
<evidence type="ECO:0000255" key="1">
    <source>
        <dbReference type="HAMAP-Rule" id="MF_01046"/>
    </source>
</evidence>
<gene>
    <name evidence="1" type="primary">hchA</name>
    <name type="ordered locus">SSON_2023</name>
</gene>
<accession>Q3Z0M5</accession>
<feature type="chain" id="PRO_1000064281" description="Protein/nucleic acid deglycase HchA">
    <location>
        <begin position="1"/>
        <end position="283"/>
    </location>
</feature>
<feature type="active site" description="Nucleophile" evidence="1">
    <location>
        <position position="185"/>
    </location>
</feature>
<feature type="binding site" evidence="1">
    <location>
        <position position="86"/>
    </location>
    <ligand>
        <name>Zn(2+)</name>
        <dbReference type="ChEBI" id="CHEBI:29105"/>
    </ligand>
</feature>
<feature type="binding site" evidence="1">
    <location>
        <position position="91"/>
    </location>
    <ligand>
        <name>Zn(2+)</name>
        <dbReference type="ChEBI" id="CHEBI:29105"/>
    </ligand>
</feature>
<feature type="binding site" evidence="1">
    <location>
        <position position="123"/>
    </location>
    <ligand>
        <name>Zn(2+)</name>
        <dbReference type="ChEBI" id="CHEBI:29105"/>
    </ligand>
</feature>
<dbReference type="EC" id="3.1.2.-" evidence="1"/>
<dbReference type="EC" id="3.5.1.-" evidence="1"/>
<dbReference type="EC" id="3.5.1.124" evidence="1"/>
<dbReference type="EMBL" id="CP000038">
    <property type="protein sequence ID" value="AAZ88687.1"/>
    <property type="molecule type" value="Genomic_DNA"/>
</dbReference>
<dbReference type="RefSeq" id="WP_000218213.1">
    <property type="nucleotide sequence ID" value="NC_007384.1"/>
</dbReference>
<dbReference type="SMR" id="Q3Z0M5"/>
<dbReference type="MEROPS" id="C56.006"/>
<dbReference type="GeneID" id="93775219"/>
<dbReference type="KEGG" id="ssn:SSON_2023"/>
<dbReference type="HOGENOM" id="CLU_066933_0_0_6"/>
<dbReference type="Proteomes" id="UP000002529">
    <property type="component" value="Chromosome"/>
</dbReference>
<dbReference type="GO" id="GO:0005737">
    <property type="term" value="C:cytoplasm"/>
    <property type="evidence" value="ECO:0007669"/>
    <property type="project" value="UniProtKB-SubCell"/>
</dbReference>
<dbReference type="GO" id="GO:0019172">
    <property type="term" value="F:glyoxalase III activity"/>
    <property type="evidence" value="ECO:0007669"/>
    <property type="project" value="TreeGrafter"/>
</dbReference>
<dbReference type="GO" id="GO:0036524">
    <property type="term" value="F:protein deglycase activity"/>
    <property type="evidence" value="ECO:0007669"/>
    <property type="project" value="UniProtKB-UniRule"/>
</dbReference>
<dbReference type="GO" id="GO:0016790">
    <property type="term" value="F:thiolester hydrolase activity"/>
    <property type="evidence" value="ECO:0007669"/>
    <property type="project" value="UniProtKB-UniRule"/>
</dbReference>
<dbReference type="GO" id="GO:0008270">
    <property type="term" value="F:zinc ion binding"/>
    <property type="evidence" value="ECO:0007669"/>
    <property type="project" value="UniProtKB-UniRule"/>
</dbReference>
<dbReference type="GO" id="GO:0006281">
    <property type="term" value="P:DNA repair"/>
    <property type="evidence" value="ECO:0007669"/>
    <property type="project" value="UniProtKB-UniRule"/>
</dbReference>
<dbReference type="GO" id="GO:0019243">
    <property type="term" value="P:methylglyoxal catabolic process to D-lactate via S-lactoyl-glutathione"/>
    <property type="evidence" value="ECO:0007669"/>
    <property type="project" value="TreeGrafter"/>
</dbReference>
<dbReference type="GO" id="GO:0030091">
    <property type="term" value="P:protein repair"/>
    <property type="evidence" value="ECO:0007669"/>
    <property type="project" value="UniProtKB-UniRule"/>
</dbReference>
<dbReference type="FunFam" id="3.40.50.880:FF:000026">
    <property type="entry name" value="Protein/nucleic acid deglycase HchA"/>
    <property type="match status" value="1"/>
</dbReference>
<dbReference type="Gene3D" id="3.40.50.880">
    <property type="match status" value="1"/>
</dbReference>
<dbReference type="HAMAP" id="MF_01046">
    <property type="entry name" value="Deglycase_HchA"/>
    <property type="match status" value="1"/>
</dbReference>
<dbReference type="InterPro" id="IPR029062">
    <property type="entry name" value="Class_I_gatase-like"/>
</dbReference>
<dbReference type="InterPro" id="IPR017283">
    <property type="entry name" value="HchA"/>
</dbReference>
<dbReference type="InterPro" id="IPR050325">
    <property type="entry name" value="Prot/Nucl_acid_deglycase"/>
</dbReference>
<dbReference type="NCBIfam" id="NF003168">
    <property type="entry name" value="PRK04155.1"/>
    <property type="match status" value="1"/>
</dbReference>
<dbReference type="PANTHER" id="PTHR48094">
    <property type="entry name" value="PROTEIN/NUCLEIC ACID DEGLYCASE DJ-1-RELATED"/>
    <property type="match status" value="1"/>
</dbReference>
<dbReference type="PANTHER" id="PTHR48094:SF20">
    <property type="entry name" value="PROTEIN_NUCLEIC ACID DEGLYCASE 1"/>
    <property type="match status" value="1"/>
</dbReference>
<dbReference type="PIRSF" id="PIRSF037798">
    <property type="entry name" value="Chaperone_HchA"/>
    <property type="match status" value="1"/>
</dbReference>
<dbReference type="SUPFAM" id="SSF52317">
    <property type="entry name" value="Class I glutamine amidotransferase-like"/>
    <property type="match status" value="1"/>
</dbReference>
<protein>
    <recommendedName>
        <fullName evidence="1">Protein/nucleic acid deglycase HchA</fullName>
        <ecNumber evidence="1">3.1.2.-</ecNumber>
        <ecNumber evidence="1">3.5.1.-</ecNumber>
        <ecNumber evidence="1">3.5.1.124</ecNumber>
    </recommendedName>
    <alternativeName>
        <fullName evidence="1">Maillard deglycase</fullName>
    </alternativeName>
</protein>